<evidence type="ECO:0000255" key="1">
    <source>
        <dbReference type="HAMAP-Rule" id="MF_00163"/>
    </source>
</evidence>
<name>DEF_CHLAD</name>
<proteinExistence type="inferred from homology"/>
<feature type="chain" id="PRO_1000200720" description="Peptide deformylase">
    <location>
        <begin position="1"/>
        <end position="188"/>
    </location>
</feature>
<feature type="active site" evidence="1">
    <location>
        <position position="153"/>
    </location>
</feature>
<feature type="binding site" evidence="1">
    <location>
        <position position="109"/>
    </location>
    <ligand>
        <name>Fe cation</name>
        <dbReference type="ChEBI" id="CHEBI:24875"/>
    </ligand>
</feature>
<feature type="binding site" evidence="1">
    <location>
        <position position="152"/>
    </location>
    <ligand>
        <name>Fe cation</name>
        <dbReference type="ChEBI" id="CHEBI:24875"/>
    </ligand>
</feature>
<feature type="binding site" evidence="1">
    <location>
        <position position="156"/>
    </location>
    <ligand>
        <name>Fe cation</name>
        <dbReference type="ChEBI" id="CHEBI:24875"/>
    </ligand>
</feature>
<accession>B8G5R5</accession>
<comment type="function">
    <text evidence="1">Removes the formyl group from the N-terminal Met of newly synthesized proteins. Requires at least a dipeptide for an efficient rate of reaction. N-terminal L-methionine is a prerequisite for activity but the enzyme has broad specificity at other positions.</text>
</comment>
<comment type="catalytic activity">
    <reaction evidence="1">
        <text>N-terminal N-formyl-L-methionyl-[peptide] + H2O = N-terminal L-methionyl-[peptide] + formate</text>
        <dbReference type="Rhea" id="RHEA:24420"/>
        <dbReference type="Rhea" id="RHEA-COMP:10639"/>
        <dbReference type="Rhea" id="RHEA-COMP:10640"/>
        <dbReference type="ChEBI" id="CHEBI:15377"/>
        <dbReference type="ChEBI" id="CHEBI:15740"/>
        <dbReference type="ChEBI" id="CHEBI:49298"/>
        <dbReference type="ChEBI" id="CHEBI:64731"/>
        <dbReference type="EC" id="3.5.1.88"/>
    </reaction>
</comment>
<comment type="cofactor">
    <cofactor evidence="1">
        <name>Fe(2+)</name>
        <dbReference type="ChEBI" id="CHEBI:29033"/>
    </cofactor>
    <text evidence="1">Binds 1 Fe(2+) ion.</text>
</comment>
<comment type="similarity">
    <text evidence="1">Belongs to the polypeptide deformylase family.</text>
</comment>
<sequence length="188" mass="21429">MAIRRILRIDDAEDRKILKMQCRPVKLPDRNLKQLVADMFETMHAANGVGLAAPQIGIPIQLCIIEIPPEYEEQPDGSLIEVNPAEPYVLINPRIVKTSGEEIMRDEGCLSLPGWYGMVPRQTWVTVEFQDLSGKHHRLRRADGLLGWAIQHEVDHLHGILFTERIRDLSTLRDITKEREAQPVEAKA</sequence>
<reference key="1">
    <citation type="submission" date="2008-12" db="EMBL/GenBank/DDBJ databases">
        <title>Complete sequence of Chloroflexus aggregans DSM 9485.</title>
        <authorList>
            <consortium name="US DOE Joint Genome Institute"/>
            <person name="Lucas S."/>
            <person name="Copeland A."/>
            <person name="Lapidus A."/>
            <person name="Glavina del Rio T."/>
            <person name="Dalin E."/>
            <person name="Tice H."/>
            <person name="Pitluck S."/>
            <person name="Foster B."/>
            <person name="Larimer F."/>
            <person name="Land M."/>
            <person name="Hauser L."/>
            <person name="Kyrpides N."/>
            <person name="Mikhailova N."/>
            <person name="Bryant D.A."/>
            <person name="Richardson P."/>
        </authorList>
    </citation>
    <scope>NUCLEOTIDE SEQUENCE [LARGE SCALE GENOMIC DNA]</scope>
    <source>
        <strain>MD-66 / DSM 9485</strain>
    </source>
</reference>
<gene>
    <name evidence="1" type="primary">def</name>
    <name type="ordered locus">Cagg_0857</name>
</gene>
<organism>
    <name type="scientific">Chloroflexus aggregans (strain MD-66 / DSM 9485)</name>
    <dbReference type="NCBI Taxonomy" id="326427"/>
    <lineage>
        <taxon>Bacteria</taxon>
        <taxon>Bacillati</taxon>
        <taxon>Chloroflexota</taxon>
        <taxon>Chloroflexia</taxon>
        <taxon>Chloroflexales</taxon>
        <taxon>Chloroflexineae</taxon>
        <taxon>Chloroflexaceae</taxon>
        <taxon>Chloroflexus</taxon>
    </lineage>
</organism>
<dbReference type="EC" id="3.5.1.88" evidence="1"/>
<dbReference type="EMBL" id="CP001337">
    <property type="protein sequence ID" value="ACL23776.1"/>
    <property type="molecule type" value="Genomic_DNA"/>
</dbReference>
<dbReference type="RefSeq" id="WP_012616142.1">
    <property type="nucleotide sequence ID" value="NC_011831.1"/>
</dbReference>
<dbReference type="SMR" id="B8G5R5"/>
<dbReference type="STRING" id="326427.Cagg_0857"/>
<dbReference type="KEGG" id="cag:Cagg_0857"/>
<dbReference type="eggNOG" id="COG0242">
    <property type="taxonomic scope" value="Bacteria"/>
</dbReference>
<dbReference type="HOGENOM" id="CLU_061901_2_0_0"/>
<dbReference type="OrthoDB" id="9784988at2"/>
<dbReference type="Proteomes" id="UP000002508">
    <property type="component" value="Chromosome"/>
</dbReference>
<dbReference type="GO" id="GO:0046872">
    <property type="term" value="F:metal ion binding"/>
    <property type="evidence" value="ECO:0007669"/>
    <property type="project" value="UniProtKB-KW"/>
</dbReference>
<dbReference type="GO" id="GO:0042586">
    <property type="term" value="F:peptide deformylase activity"/>
    <property type="evidence" value="ECO:0007669"/>
    <property type="project" value="UniProtKB-UniRule"/>
</dbReference>
<dbReference type="GO" id="GO:0043686">
    <property type="term" value="P:co-translational protein modification"/>
    <property type="evidence" value="ECO:0007669"/>
    <property type="project" value="TreeGrafter"/>
</dbReference>
<dbReference type="GO" id="GO:0006412">
    <property type="term" value="P:translation"/>
    <property type="evidence" value="ECO:0007669"/>
    <property type="project" value="UniProtKB-UniRule"/>
</dbReference>
<dbReference type="CDD" id="cd00487">
    <property type="entry name" value="Pep_deformylase"/>
    <property type="match status" value="1"/>
</dbReference>
<dbReference type="Gene3D" id="3.90.45.10">
    <property type="entry name" value="Peptide deformylase"/>
    <property type="match status" value="1"/>
</dbReference>
<dbReference type="HAMAP" id="MF_00163">
    <property type="entry name" value="Pep_deformylase"/>
    <property type="match status" value="1"/>
</dbReference>
<dbReference type="InterPro" id="IPR023635">
    <property type="entry name" value="Peptide_deformylase"/>
</dbReference>
<dbReference type="InterPro" id="IPR036821">
    <property type="entry name" value="Peptide_deformylase_sf"/>
</dbReference>
<dbReference type="NCBIfam" id="TIGR00079">
    <property type="entry name" value="pept_deformyl"/>
    <property type="match status" value="1"/>
</dbReference>
<dbReference type="NCBIfam" id="NF001159">
    <property type="entry name" value="PRK00150.1-3"/>
    <property type="match status" value="1"/>
</dbReference>
<dbReference type="PANTHER" id="PTHR10458">
    <property type="entry name" value="PEPTIDE DEFORMYLASE"/>
    <property type="match status" value="1"/>
</dbReference>
<dbReference type="PANTHER" id="PTHR10458:SF22">
    <property type="entry name" value="PEPTIDE DEFORMYLASE"/>
    <property type="match status" value="1"/>
</dbReference>
<dbReference type="Pfam" id="PF01327">
    <property type="entry name" value="Pep_deformylase"/>
    <property type="match status" value="1"/>
</dbReference>
<dbReference type="PIRSF" id="PIRSF004749">
    <property type="entry name" value="Pep_def"/>
    <property type="match status" value="1"/>
</dbReference>
<dbReference type="PRINTS" id="PR01576">
    <property type="entry name" value="PDEFORMYLASE"/>
</dbReference>
<dbReference type="SUPFAM" id="SSF56420">
    <property type="entry name" value="Peptide deformylase"/>
    <property type="match status" value="1"/>
</dbReference>
<keyword id="KW-0378">Hydrolase</keyword>
<keyword id="KW-0408">Iron</keyword>
<keyword id="KW-0479">Metal-binding</keyword>
<keyword id="KW-0648">Protein biosynthesis</keyword>
<protein>
    <recommendedName>
        <fullName evidence="1">Peptide deformylase</fullName>
        <shortName evidence="1">PDF</shortName>
        <ecNumber evidence="1">3.5.1.88</ecNumber>
    </recommendedName>
    <alternativeName>
        <fullName evidence="1">Polypeptide deformylase</fullName>
    </alternativeName>
</protein>